<sequence>MCGIIGILGKKCVASSLIAGLKRLEYRGYDSSGIATVHNGRLYRVRAEGKLVHLEEKLKKTPLKGSLGIGHTRWATHGVAVERNAHPHVTERLAIVHNGIIENFVELQKELIEEGYTFETETDTEVIAHLITRALKSGLSQQEAIRTSWKRLQGAFAIVVIFEGQDNLMIAARSGPPLAIGYGQDEFFVGSDAVALASFVDRISYMEDGDWAVLTREGVTIYGADNQPVKRPITTLFEGTLLVSKGNHRHFMHKEMFEQPEVISHNLAHYLDLGNYTVRSLKNLIDWKKINRILFASCGTAYYSTLVARYWFENFAALSVDNDIASEFRYREPPITSDVLSVFVSQSGETADTLACLRYCREHGVKTATIVNVEQSTMAREADFILPTRAGPEIGVASTKAFTCQLATLAAMALDAAKQRGSLSEKAEHQFVQQLAEVPRILNEVLKLDDKIEQICRDLVNVRGVLYLGRGTSYPIALEGALKLKELSYIHAEGYAAGELKHGPIALVDEAIPVIVVAPYDRWFEKTFSNMQEVAARNGRIILITDKRGAEVAGLDTLSTIVLPNIPEFIAPIIYALPIQLIAYHTAVLLGTDVDQPRNLAKSVTVE</sequence>
<feature type="initiator methionine" description="Removed" evidence="1">
    <location>
        <position position="1"/>
    </location>
</feature>
<feature type="chain" id="PRO_0000135303" description="Glutamine--fructose-6-phosphate aminotransferase [isomerizing]">
    <location>
        <begin position="2"/>
        <end position="607"/>
    </location>
</feature>
<feature type="domain" description="Glutamine amidotransferase type-2" evidence="1">
    <location>
        <begin position="2"/>
        <end position="217"/>
    </location>
</feature>
<feature type="domain" description="SIS 1" evidence="1">
    <location>
        <begin position="277"/>
        <end position="422"/>
    </location>
</feature>
<feature type="domain" description="SIS 2" evidence="1">
    <location>
        <begin position="455"/>
        <end position="597"/>
    </location>
</feature>
<feature type="active site" description="Nucleophile; for GATase activity" evidence="1">
    <location>
        <position position="2"/>
    </location>
</feature>
<feature type="active site" description="For Fru-6P isomerization activity" evidence="1">
    <location>
        <position position="602"/>
    </location>
</feature>
<gene>
    <name evidence="1" type="primary">glmS</name>
    <name type="ordered locus">BQ07640</name>
</gene>
<comment type="function">
    <text evidence="1">Catalyzes the first step in hexosamine metabolism, converting fructose-6P into glucosamine-6P using glutamine as a nitrogen source.</text>
</comment>
<comment type="catalytic activity">
    <reaction evidence="1">
        <text>D-fructose 6-phosphate + L-glutamine = D-glucosamine 6-phosphate + L-glutamate</text>
        <dbReference type="Rhea" id="RHEA:13237"/>
        <dbReference type="ChEBI" id="CHEBI:29985"/>
        <dbReference type="ChEBI" id="CHEBI:58359"/>
        <dbReference type="ChEBI" id="CHEBI:58725"/>
        <dbReference type="ChEBI" id="CHEBI:61527"/>
        <dbReference type="EC" id="2.6.1.16"/>
    </reaction>
</comment>
<comment type="subunit">
    <text evidence="1">Homodimer.</text>
</comment>
<comment type="subcellular location">
    <subcellularLocation>
        <location evidence="1">Cytoplasm</location>
    </subcellularLocation>
</comment>
<protein>
    <recommendedName>
        <fullName evidence="1">Glutamine--fructose-6-phosphate aminotransferase [isomerizing]</fullName>
        <ecNumber evidence="1">2.6.1.16</ecNumber>
    </recommendedName>
    <alternativeName>
        <fullName evidence="1">D-fructose-6-phosphate amidotransferase</fullName>
    </alternativeName>
    <alternativeName>
        <fullName evidence="1">GFAT</fullName>
    </alternativeName>
    <alternativeName>
        <fullName evidence="1">Glucosamine-6-phosphate synthase</fullName>
    </alternativeName>
    <alternativeName>
        <fullName evidence="1">Hexosephosphate aminotransferase</fullName>
    </alternativeName>
    <alternativeName>
        <fullName evidence="1">L-glutamine--D-fructose-6-phosphate amidotransferase</fullName>
    </alternativeName>
</protein>
<keyword id="KW-0032">Aminotransferase</keyword>
<keyword id="KW-0963">Cytoplasm</keyword>
<keyword id="KW-0315">Glutamine amidotransferase</keyword>
<keyword id="KW-0677">Repeat</keyword>
<keyword id="KW-0808">Transferase</keyword>
<reference key="1">
    <citation type="journal article" date="2004" name="Proc. Natl. Acad. Sci. U.S.A.">
        <title>The louse-borne human pathogen Bartonella quintana is a genomic derivative of the zoonotic agent Bartonella henselae.</title>
        <authorList>
            <person name="Alsmark U.C.M."/>
            <person name="Frank A.C."/>
            <person name="Karlberg E.O."/>
            <person name="Legault B.-A."/>
            <person name="Ardell D.H."/>
            <person name="Canbaeck B."/>
            <person name="Eriksson A.-S."/>
            <person name="Naeslund A.K."/>
            <person name="Handley S.A."/>
            <person name="Huvet M."/>
            <person name="La Scola B."/>
            <person name="Holmberg M."/>
            <person name="Andersson S.G.E."/>
        </authorList>
    </citation>
    <scope>NUCLEOTIDE SEQUENCE [LARGE SCALE GENOMIC DNA]</scope>
    <source>
        <strain>Toulouse</strain>
    </source>
</reference>
<organism>
    <name type="scientific">Bartonella quintana (strain Toulouse)</name>
    <name type="common">Rochalimaea quintana</name>
    <dbReference type="NCBI Taxonomy" id="283165"/>
    <lineage>
        <taxon>Bacteria</taxon>
        <taxon>Pseudomonadati</taxon>
        <taxon>Pseudomonadota</taxon>
        <taxon>Alphaproteobacteria</taxon>
        <taxon>Hyphomicrobiales</taxon>
        <taxon>Bartonellaceae</taxon>
        <taxon>Bartonella</taxon>
    </lineage>
</organism>
<name>GLMS_BARQU</name>
<dbReference type="EC" id="2.6.1.16" evidence="1"/>
<dbReference type="EMBL" id="BX897700">
    <property type="protein sequence ID" value="CAF26248.1"/>
    <property type="molecule type" value="Genomic_DNA"/>
</dbReference>
<dbReference type="RefSeq" id="WP_011179499.1">
    <property type="nucleotide sequence ID" value="NC_005955.1"/>
</dbReference>
<dbReference type="SMR" id="Q6FZH6"/>
<dbReference type="KEGG" id="bqu:BQ07640"/>
<dbReference type="eggNOG" id="COG0449">
    <property type="taxonomic scope" value="Bacteria"/>
</dbReference>
<dbReference type="HOGENOM" id="CLU_012520_5_2_5"/>
<dbReference type="OrthoDB" id="9761808at2"/>
<dbReference type="Proteomes" id="UP000000597">
    <property type="component" value="Chromosome"/>
</dbReference>
<dbReference type="GO" id="GO:0005829">
    <property type="term" value="C:cytosol"/>
    <property type="evidence" value="ECO:0007669"/>
    <property type="project" value="TreeGrafter"/>
</dbReference>
<dbReference type="GO" id="GO:0097367">
    <property type="term" value="F:carbohydrate derivative binding"/>
    <property type="evidence" value="ECO:0007669"/>
    <property type="project" value="InterPro"/>
</dbReference>
<dbReference type="GO" id="GO:0004360">
    <property type="term" value="F:glutamine-fructose-6-phosphate transaminase (isomerizing) activity"/>
    <property type="evidence" value="ECO:0007669"/>
    <property type="project" value="UniProtKB-UniRule"/>
</dbReference>
<dbReference type="GO" id="GO:0005975">
    <property type="term" value="P:carbohydrate metabolic process"/>
    <property type="evidence" value="ECO:0007669"/>
    <property type="project" value="UniProtKB-UniRule"/>
</dbReference>
<dbReference type="GO" id="GO:0006002">
    <property type="term" value="P:fructose 6-phosphate metabolic process"/>
    <property type="evidence" value="ECO:0007669"/>
    <property type="project" value="TreeGrafter"/>
</dbReference>
<dbReference type="GO" id="GO:0006487">
    <property type="term" value="P:protein N-linked glycosylation"/>
    <property type="evidence" value="ECO:0007669"/>
    <property type="project" value="TreeGrafter"/>
</dbReference>
<dbReference type="GO" id="GO:0006047">
    <property type="term" value="P:UDP-N-acetylglucosamine metabolic process"/>
    <property type="evidence" value="ECO:0007669"/>
    <property type="project" value="TreeGrafter"/>
</dbReference>
<dbReference type="CDD" id="cd00714">
    <property type="entry name" value="GFAT"/>
    <property type="match status" value="1"/>
</dbReference>
<dbReference type="CDD" id="cd05008">
    <property type="entry name" value="SIS_GlmS_GlmD_1"/>
    <property type="match status" value="1"/>
</dbReference>
<dbReference type="CDD" id="cd05009">
    <property type="entry name" value="SIS_GlmS_GlmD_2"/>
    <property type="match status" value="1"/>
</dbReference>
<dbReference type="FunFam" id="3.40.50.10490:FF:000001">
    <property type="entry name" value="Glutamine--fructose-6-phosphate aminotransferase [isomerizing]"/>
    <property type="match status" value="1"/>
</dbReference>
<dbReference type="FunFam" id="3.40.50.10490:FF:000002">
    <property type="entry name" value="Glutamine--fructose-6-phosphate aminotransferase [isomerizing]"/>
    <property type="match status" value="1"/>
</dbReference>
<dbReference type="FunFam" id="3.60.20.10:FF:000006">
    <property type="entry name" value="Glutamine--fructose-6-phosphate aminotransferase [isomerizing]"/>
    <property type="match status" value="1"/>
</dbReference>
<dbReference type="Gene3D" id="3.40.50.10490">
    <property type="entry name" value="Glucose-6-phosphate isomerase like protein, domain 1"/>
    <property type="match status" value="2"/>
</dbReference>
<dbReference type="Gene3D" id="3.60.20.10">
    <property type="entry name" value="Glutamine Phosphoribosylpyrophosphate, subunit 1, domain 1"/>
    <property type="match status" value="1"/>
</dbReference>
<dbReference type="HAMAP" id="MF_00164">
    <property type="entry name" value="GlmS"/>
    <property type="match status" value="1"/>
</dbReference>
<dbReference type="InterPro" id="IPR017932">
    <property type="entry name" value="GATase_2_dom"/>
</dbReference>
<dbReference type="InterPro" id="IPR005855">
    <property type="entry name" value="GFAT"/>
</dbReference>
<dbReference type="InterPro" id="IPR047084">
    <property type="entry name" value="GFAT_N"/>
</dbReference>
<dbReference type="InterPro" id="IPR035466">
    <property type="entry name" value="GlmS/AgaS_SIS"/>
</dbReference>
<dbReference type="InterPro" id="IPR035490">
    <property type="entry name" value="GlmS/FrlB_SIS"/>
</dbReference>
<dbReference type="InterPro" id="IPR029055">
    <property type="entry name" value="Ntn_hydrolases_N"/>
</dbReference>
<dbReference type="InterPro" id="IPR001347">
    <property type="entry name" value="SIS_dom"/>
</dbReference>
<dbReference type="InterPro" id="IPR046348">
    <property type="entry name" value="SIS_dom_sf"/>
</dbReference>
<dbReference type="NCBIfam" id="TIGR01135">
    <property type="entry name" value="glmS"/>
    <property type="match status" value="1"/>
</dbReference>
<dbReference type="NCBIfam" id="NF001484">
    <property type="entry name" value="PRK00331.1"/>
    <property type="match status" value="1"/>
</dbReference>
<dbReference type="PANTHER" id="PTHR10937">
    <property type="entry name" value="GLUCOSAMINE--FRUCTOSE-6-PHOSPHATE AMINOTRANSFERASE, ISOMERIZING"/>
    <property type="match status" value="1"/>
</dbReference>
<dbReference type="PANTHER" id="PTHR10937:SF0">
    <property type="entry name" value="GLUTAMINE--FRUCTOSE-6-PHOSPHATE TRANSAMINASE (ISOMERIZING)"/>
    <property type="match status" value="1"/>
</dbReference>
<dbReference type="Pfam" id="PF13522">
    <property type="entry name" value="GATase_6"/>
    <property type="match status" value="1"/>
</dbReference>
<dbReference type="Pfam" id="PF01380">
    <property type="entry name" value="SIS"/>
    <property type="match status" value="2"/>
</dbReference>
<dbReference type="SUPFAM" id="SSF56235">
    <property type="entry name" value="N-terminal nucleophile aminohydrolases (Ntn hydrolases)"/>
    <property type="match status" value="1"/>
</dbReference>
<dbReference type="SUPFAM" id="SSF53697">
    <property type="entry name" value="SIS domain"/>
    <property type="match status" value="1"/>
</dbReference>
<dbReference type="PROSITE" id="PS51278">
    <property type="entry name" value="GATASE_TYPE_2"/>
    <property type="match status" value="1"/>
</dbReference>
<dbReference type="PROSITE" id="PS51464">
    <property type="entry name" value="SIS"/>
    <property type="match status" value="2"/>
</dbReference>
<proteinExistence type="inferred from homology"/>
<accession>Q6FZH6</accession>
<evidence type="ECO:0000255" key="1">
    <source>
        <dbReference type="HAMAP-Rule" id="MF_00164"/>
    </source>
</evidence>